<proteinExistence type="inferred from homology"/>
<organism>
    <name type="scientific">Escherichia coli O157:H7</name>
    <dbReference type="NCBI Taxonomy" id="83334"/>
    <lineage>
        <taxon>Bacteria</taxon>
        <taxon>Pseudomonadati</taxon>
        <taxon>Pseudomonadota</taxon>
        <taxon>Gammaproteobacteria</taxon>
        <taxon>Enterobacterales</taxon>
        <taxon>Enterobacteriaceae</taxon>
        <taxon>Escherichia</taxon>
    </lineage>
</organism>
<protein>
    <recommendedName>
        <fullName evidence="1">Malate dehydrogenase</fullName>
        <ecNumber evidence="1">1.1.1.37</ecNumber>
    </recommendedName>
</protein>
<comment type="function">
    <text evidence="1">Catalyzes the reversible oxidation of malate to oxaloacetate.</text>
</comment>
<comment type="catalytic activity">
    <reaction evidence="1">
        <text>(S)-malate + NAD(+) = oxaloacetate + NADH + H(+)</text>
        <dbReference type="Rhea" id="RHEA:21432"/>
        <dbReference type="ChEBI" id="CHEBI:15378"/>
        <dbReference type="ChEBI" id="CHEBI:15589"/>
        <dbReference type="ChEBI" id="CHEBI:16452"/>
        <dbReference type="ChEBI" id="CHEBI:57540"/>
        <dbReference type="ChEBI" id="CHEBI:57945"/>
        <dbReference type="EC" id="1.1.1.37"/>
    </reaction>
</comment>
<comment type="subunit">
    <text evidence="1">Homodimer.</text>
</comment>
<comment type="similarity">
    <text evidence="1">Belongs to the LDH/MDH superfamily. MDH type 1 family.</text>
</comment>
<gene>
    <name evidence="1" type="primary">mdh</name>
    <name type="synonym">mdhA</name>
    <name type="ordered locus">Z4595</name>
    <name type="ordered locus">ECs4109</name>
</gene>
<name>MDH_ECO57</name>
<sequence length="312" mass="32337">MKVAVLGAAGGIGQALALLLKTQLPSGSELSLYDIAPVTPGVAVDLSHIPTAVKIKGFSGEDATPALEGADVVLISAGVARKPGMDRSDLFNVNAGIVKNLVQQVAKTCPKACIGIITNPVNTTVAIAAEVLKKAGVYDKNKLFGVTTLDIIRSNTFVAELKGKQPGEVEVPVIGGHSGVTILPLLSQVPGVSFTEQEVADLTKRIQNAGTEVVEAKAGGGSATLSMGQAAARFGLSLVRALQGEQGVVECAYVEGDGQYARFFSQPLLLGKNGVEERKSIGTLSAFEQNALEGMLDTLKKDIALGEEFVNK</sequence>
<accession>P61891</accession>
<accession>O30401</accession>
<accession>O30402</accession>
<accession>O30403</accession>
<accession>P06994</accession>
<accession>Q59343</accession>
<accession>Q59344</accession>
<accession>Q59345</accession>
<accession>Q59346</accession>
<accession>Q59347</accession>
<accession>Q59348</accession>
<accession>Q60133</accession>
<accession>Q60150</accession>
<keyword id="KW-0520">NAD</keyword>
<keyword id="KW-0560">Oxidoreductase</keyword>
<keyword id="KW-1185">Reference proteome</keyword>
<keyword id="KW-0816">Tricarboxylic acid cycle</keyword>
<feature type="chain" id="PRO_0000113303" description="Malate dehydrogenase">
    <location>
        <begin position="1"/>
        <end position="312"/>
    </location>
</feature>
<feature type="active site" description="Proton acceptor" evidence="1">
    <location>
        <position position="177"/>
    </location>
</feature>
<feature type="binding site" evidence="1">
    <location>
        <begin position="7"/>
        <end position="13"/>
    </location>
    <ligand>
        <name>NAD(+)</name>
        <dbReference type="ChEBI" id="CHEBI:57540"/>
    </ligand>
</feature>
<feature type="binding site" evidence="1">
    <location>
        <position position="34"/>
    </location>
    <ligand>
        <name>NAD(+)</name>
        <dbReference type="ChEBI" id="CHEBI:57540"/>
    </ligand>
</feature>
<feature type="binding site" evidence="1">
    <location>
        <position position="81"/>
    </location>
    <ligand>
        <name>substrate</name>
    </ligand>
</feature>
<feature type="binding site" evidence="1">
    <location>
        <position position="87"/>
    </location>
    <ligand>
        <name>substrate</name>
    </ligand>
</feature>
<feature type="binding site" evidence="1">
    <location>
        <position position="94"/>
    </location>
    <ligand>
        <name>NAD(+)</name>
        <dbReference type="ChEBI" id="CHEBI:57540"/>
    </ligand>
</feature>
<feature type="binding site" evidence="1">
    <location>
        <begin position="117"/>
        <end position="119"/>
    </location>
    <ligand>
        <name>NAD(+)</name>
        <dbReference type="ChEBI" id="CHEBI:57540"/>
    </ligand>
</feature>
<feature type="binding site" evidence="1">
    <location>
        <position position="119"/>
    </location>
    <ligand>
        <name>substrate</name>
    </ligand>
</feature>
<feature type="binding site" evidence="1">
    <location>
        <position position="153"/>
    </location>
    <ligand>
        <name>substrate</name>
    </ligand>
</feature>
<feature type="binding site" evidence="1">
    <location>
        <position position="227"/>
    </location>
    <ligand>
        <name>NAD(+)</name>
        <dbReference type="ChEBI" id="CHEBI:57540"/>
    </ligand>
</feature>
<dbReference type="EC" id="1.1.1.37" evidence="1"/>
<dbReference type="EMBL" id="AE005174">
    <property type="protein sequence ID" value="AAG58364.1"/>
    <property type="molecule type" value="Genomic_DNA"/>
</dbReference>
<dbReference type="EMBL" id="BA000007">
    <property type="protein sequence ID" value="BAB37532.1"/>
    <property type="molecule type" value="Genomic_DNA"/>
</dbReference>
<dbReference type="EMBL" id="AF071027">
    <property type="protein sequence ID" value="AAC28657.1"/>
    <property type="molecule type" value="Genomic_DNA"/>
</dbReference>
<dbReference type="EMBL" id="AF071032">
    <property type="protein sequence ID" value="AAC28662.1"/>
    <property type="molecule type" value="Genomic_DNA"/>
</dbReference>
<dbReference type="EMBL" id="AF071033">
    <property type="protein sequence ID" value="AAC28663.1"/>
    <property type="molecule type" value="Genomic_DNA"/>
</dbReference>
<dbReference type="RefSeq" id="NP_312136.1">
    <property type="nucleotide sequence ID" value="NC_002695.1"/>
</dbReference>
<dbReference type="RefSeq" id="WP_001295272.1">
    <property type="nucleotide sequence ID" value="NZ_SWKA01000005.1"/>
</dbReference>
<dbReference type="SMR" id="P61891"/>
<dbReference type="STRING" id="155864.Z4595"/>
<dbReference type="GeneID" id="916042"/>
<dbReference type="GeneID" id="93778749"/>
<dbReference type="KEGG" id="ece:Z4595"/>
<dbReference type="KEGG" id="ecs:ECs_4109"/>
<dbReference type="PATRIC" id="fig|386585.9.peg.4290"/>
<dbReference type="eggNOG" id="COG0039">
    <property type="taxonomic scope" value="Bacteria"/>
</dbReference>
<dbReference type="HOGENOM" id="CLU_047181_0_1_6"/>
<dbReference type="OMA" id="ASCAEYI"/>
<dbReference type="SABIO-RK" id="P61891"/>
<dbReference type="Proteomes" id="UP000000558">
    <property type="component" value="Chromosome"/>
</dbReference>
<dbReference type="Proteomes" id="UP000002519">
    <property type="component" value="Chromosome"/>
</dbReference>
<dbReference type="GO" id="GO:0005737">
    <property type="term" value="C:cytoplasm"/>
    <property type="evidence" value="ECO:0007669"/>
    <property type="project" value="TreeGrafter"/>
</dbReference>
<dbReference type="GO" id="GO:0030060">
    <property type="term" value="F:L-malate dehydrogenase (NAD+) activity"/>
    <property type="evidence" value="ECO:0007669"/>
    <property type="project" value="UniProtKB-UniRule"/>
</dbReference>
<dbReference type="GO" id="GO:0006108">
    <property type="term" value="P:malate metabolic process"/>
    <property type="evidence" value="ECO:0007669"/>
    <property type="project" value="InterPro"/>
</dbReference>
<dbReference type="GO" id="GO:0006099">
    <property type="term" value="P:tricarboxylic acid cycle"/>
    <property type="evidence" value="ECO:0007669"/>
    <property type="project" value="UniProtKB-UniRule"/>
</dbReference>
<dbReference type="CDD" id="cd01337">
    <property type="entry name" value="MDH_glyoxysomal_mitochondrial"/>
    <property type="match status" value="1"/>
</dbReference>
<dbReference type="FunFam" id="3.40.50.720:FF:000017">
    <property type="entry name" value="Malate dehydrogenase"/>
    <property type="match status" value="1"/>
</dbReference>
<dbReference type="FunFam" id="3.90.110.10:FF:000001">
    <property type="entry name" value="Malate dehydrogenase"/>
    <property type="match status" value="1"/>
</dbReference>
<dbReference type="Gene3D" id="3.90.110.10">
    <property type="entry name" value="Lactate dehydrogenase/glycoside hydrolase, family 4, C-terminal"/>
    <property type="match status" value="1"/>
</dbReference>
<dbReference type="Gene3D" id="3.40.50.720">
    <property type="entry name" value="NAD(P)-binding Rossmann-like Domain"/>
    <property type="match status" value="1"/>
</dbReference>
<dbReference type="HAMAP" id="MF_01516">
    <property type="entry name" value="Malate_dehydrog_1"/>
    <property type="match status" value="1"/>
</dbReference>
<dbReference type="InterPro" id="IPR001557">
    <property type="entry name" value="L-lactate/malate_DH"/>
</dbReference>
<dbReference type="InterPro" id="IPR022383">
    <property type="entry name" value="Lactate/malate_DH_C"/>
</dbReference>
<dbReference type="InterPro" id="IPR001236">
    <property type="entry name" value="Lactate/malate_DH_N"/>
</dbReference>
<dbReference type="InterPro" id="IPR015955">
    <property type="entry name" value="Lactate_DH/Glyco_Ohase_4_C"/>
</dbReference>
<dbReference type="InterPro" id="IPR001252">
    <property type="entry name" value="Malate_DH_AS"/>
</dbReference>
<dbReference type="InterPro" id="IPR010097">
    <property type="entry name" value="Malate_DH_type1"/>
</dbReference>
<dbReference type="InterPro" id="IPR023958">
    <property type="entry name" value="Malate_DH_type1_bac"/>
</dbReference>
<dbReference type="InterPro" id="IPR036291">
    <property type="entry name" value="NAD(P)-bd_dom_sf"/>
</dbReference>
<dbReference type="NCBIfam" id="TIGR01772">
    <property type="entry name" value="MDH_euk_gproteo"/>
    <property type="match status" value="1"/>
</dbReference>
<dbReference type="PANTHER" id="PTHR11540">
    <property type="entry name" value="MALATE AND LACTATE DEHYDROGENASE"/>
    <property type="match status" value="1"/>
</dbReference>
<dbReference type="PANTHER" id="PTHR11540:SF16">
    <property type="entry name" value="MALATE DEHYDROGENASE, MITOCHONDRIAL"/>
    <property type="match status" value="1"/>
</dbReference>
<dbReference type="Pfam" id="PF02866">
    <property type="entry name" value="Ldh_1_C"/>
    <property type="match status" value="1"/>
</dbReference>
<dbReference type="Pfam" id="PF00056">
    <property type="entry name" value="Ldh_1_N"/>
    <property type="match status" value="1"/>
</dbReference>
<dbReference type="PIRSF" id="PIRSF000102">
    <property type="entry name" value="Lac_mal_DH"/>
    <property type="match status" value="1"/>
</dbReference>
<dbReference type="SUPFAM" id="SSF56327">
    <property type="entry name" value="LDH C-terminal domain-like"/>
    <property type="match status" value="1"/>
</dbReference>
<dbReference type="SUPFAM" id="SSF51735">
    <property type="entry name" value="NAD(P)-binding Rossmann-fold domains"/>
    <property type="match status" value="1"/>
</dbReference>
<dbReference type="PROSITE" id="PS00068">
    <property type="entry name" value="MDH"/>
    <property type="match status" value="1"/>
</dbReference>
<evidence type="ECO:0000255" key="1">
    <source>
        <dbReference type="HAMAP-Rule" id="MF_01516"/>
    </source>
</evidence>
<reference key="1">
    <citation type="journal article" date="2001" name="Nature">
        <title>Genome sequence of enterohaemorrhagic Escherichia coli O157:H7.</title>
        <authorList>
            <person name="Perna N.T."/>
            <person name="Plunkett G. III"/>
            <person name="Burland V."/>
            <person name="Mau B."/>
            <person name="Glasner J.D."/>
            <person name="Rose D.J."/>
            <person name="Mayhew G.F."/>
            <person name="Evans P.S."/>
            <person name="Gregor J."/>
            <person name="Kirkpatrick H.A."/>
            <person name="Posfai G."/>
            <person name="Hackett J."/>
            <person name="Klink S."/>
            <person name="Boutin A."/>
            <person name="Shao Y."/>
            <person name="Miller L."/>
            <person name="Grotbeck E.J."/>
            <person name="Davis N.W."/>
            <person name="Lim A."/>
            <person name="Dimalanta E.T."/>
            <person name="Potamousis K."/>
            <person name="Apodaca J."/>
            <person name="Anantharaman T.S."/>
            <person name="Lin J."/>
            <person name="Yen G."/>
            <person name="Schwartz D.C."/>
            <person name="Welch R.A."/>
            <person name="Blattner F.R."/>
        </authorList>
    </citation>
    <scope>NUCLEOTIDE SEQUENCE [LARGE SCALE GENOMIC DNA]</scope>
    <source>
        <strain>O157:H7 / EDL933 / ATCC 700927 / EHEC</strain>
    </source>
</reference>
<reference key="2">
    <citation type="journal article" date="2001" name="DNA Res.">
        <title>Complete genome sequence of enterohemorrhagic Escherichia coli O157:H7 and genomic comparison with a laboratory strain K-12.</title>
        <authorList>
            <person name="Hayashi T."/>
            <person name="Makino K."/>
            <person name="Ohnishi M."/>
            <person name="Kurokawa K."/>
            <person name="Ishii K."/>
            <person name="Yokoyama K."/>
            <person name="Han C.-G."/>
            <person name="Ohtsubo E."/>
            <person name="Nakayama K."/>
            <person name="Murata T."/>
            <person name="Tanaka M."/>
            <person name="Tobe T."/>
            <person name="Iida T."/>
            <person name="Takami H."/>
            <person name="Honda T."/>
            <person name="Sasakawa C."/>
            <person name="Ogasawara N."/>
            <person name="Yasunaga T."/>
            <person name="Kuhara S."/>
            <person name="Shiba T."/>
            <person name="Hattori M."/>
            <person name="Shinagawa H."/>
        </authorList>
    </citation>
    <scope>NUCLEOTIDE SEQUENCE [LARGE SCALE GENOMIC DNA]</scope>
    <source>
        <strain>O157:H7 / Sakai / RIMD 0509952 / EHEC</strain>
    </source>
</reference>
<reference key="3">
    <citation type="journal article" date="1998" name="Infect. Immun.">
        <title>Molecular evolution of a pathogenicity island from enterohemorrhagic Escherichia coli O157:H7.</title>
        <authorList>
            <person name="Perna N.T."/>
            <person name="Mayhew G.F."/>
            <person name="Posfai G."/>
            <person name="Elliott S."/>
            <person name="Donnenberg M.S."/>
            <person name="Kaper J.B."/>
            <person name="Blattner F.R."/>
        </authorList>
    </citation>
    <scope>NUCLEOTIDE SEQUENCE [GENOMIC DNA] OF 12-299</scope>
    <source>
        <strain>O157:H7 / 3077-88 / EHEC</strain>
        <strain>O157:H7 / C374-83 / EHEC</strain>
        <strain>O157:H7 / EDL933 / ATCC 700927 / EHEC</strain>
    </source>
</reference>